<evidence type="ECO:0000255" key="1">
    <source>
        <dbReference type="HAMAP-Rule" id="MF_00500"/>
    </source>
</evidence>
<evidence type="ECO:0000256" key="2">
    <source>
        <dbReference type="SAM" id="MobiDB-lite"/>
    </source>
</evidence>
<evidence type="ECO:0000305" key="3"/>
<organism>
    <name type="scientific">Burkholderia pseudomallei (strain K96243)</name>
    <dbReference type="NCBI Taxonomy" id="272560"/>
    <lineage>
        <taxon>Bacteria</taxon>
        <taxon>Pseudomonadati</taxon>
        <taxon>Pseudomonadota</taxon>
        <taxon>Betaproteobacteria</taxon>
        <taxon>Burkholderiales</taxon>
        <taxon>Burkholderiaceae</taxon>
        <taxon>Burkholderia</taxon>
        <taxon>pseudomallei group</taxon>
    </lineage>
</organism>
<feature type="chain" id="PRO_0000167938" description="Small ribosomal subunit protein bS20">
    <location>
        <begin position="1"/>
        <end position="92"/>
    </location>
</feature>
<feature type="region of interest" description="Disordered" evidence="2">
    <location>
        <begin position="1"/>
        <end position="25"/>
    </location>
</feature>
<proteinExistence type="inferred from homology"/>
<gene>
    <name evidence="1" type="primary">rpsT</name>
    <name type="ordered locus">BPSL0871</name>
</gene>
<protein>
    <recommendedName>
        <fullName evidence="1">Small ribosomal subunit protein bS20</fullName>
    </recommendedName>
    <alternativeName>
        <fullName evidence="3">30S ribosomal protein S20</fullName>
    </alternativeName>
</protein>
<sequence length="92" mass="9847">MANSAQARKRARQAAKANSHNSALRSKFRTAIKAVRKAIDAGDQAKAAELFKAATKTIDTIADKKIVHKNKAARHKSRLSAAVKGLQAQAAQ</sequence>
<keyword id="KW-1185">Reference proteome</keyword>
<keyword id="KW-0687">Ribonucleoprotein</keyword>
<keyword id="KW-0689">Ribosomal protein</keyword>
<keyword id="KW-0694">RNA-binding</keyword>
<keyword id="KW-0699">rRNA-binding</keyword>
<comment type="function">
    <text evidence="1">Binds directly to 16S ribosomal RNA.</text>
</comment>
<comment type="similarity">
    <text evidence="1">Belongs to the bacterial ribosomal protein bS20 family.</text>
</comment>
<dbReference type="EMBL" id="BX571965">
    <property type="protein sequence ID" value="CAH34863.1"/>
    <property type="molecule type" value="Genomic_DNA"/>
</dbReference>
<dbReference type="RefSeq" id="WP_004189743.1">
    <property type="nucleotide sequence ID" value="NZ_CP009538.1"/>
</dbReference>
<dbReference type="RefSeq" id="YP_107496.1">
    <property type="nucleotide sequence ID" value="NC_006350.1"/>
</dbReference>
<dbReference type="SMR" id="Q63WM0"/>
<dbReference type="STRING" id="272560.BPSL0871"/>
<dbReference type="GeneID" id="93059378"/>
<dbReference type="KEGG" id="bps:BPSL0871"/>
<dbReference type="PATRIC" id="fig|272560.51.peg.725"/>
<dbReference type="eggNOG" id="COG0268">
    <property type="taxonomic scope" value="Bacteria"/>
</dbReference>
<dbReference type="Proteomes" id="UP000000605">
    <property type="component" value="Chromosome 1"/>
</dbReference>
<dbReference type="GO" id="GO:0005829">
    <property type="term" value="C:cytosol"/>
    <property type="evidence" value="ECO:0007669"/>
    <property type="project" value="TreeGrafter"/>
</dbReference>
<dbReference type="GO" id="GO:0015935">
    <property type="term" value="C:small ribosomal subunit"/>
    <property type="evidence" value="ECO:0007669"/>
    <property type="project" value="TreeGrafter"/>
</dbReference>
<dbReference type="GO" id="GO:0070181">
    <property type="term" value="F:small ribosomal subunit rRNA binding"/>
    <property type="evidence" value="ECO:0007669"/>
    <property type="project" value="TreeGrafter"/>
</dbReference>
<dbReference type="GO" id="GO:0003735">
    <property type="term" value="F:structural constituent of ribosome"/>
    <property type="evidence" value="ECO:0007669"/>
    <property type="project" value="InterPro"/>
</dbReference>
<dbReference type="GO" id="GO:0006412">
    <property type="term" value="P:translation"/>
    <property type="evidence" value="ECO:0007669"/>
    <property type="project" value="UniProtKB-UniRule"/>
</dbReference>
<dbReference type="FunFam" id="1.20.58.110:FF:000001">
    <property type="entry name" value="30S ribosomal protein S20"/>
    <property type="match status" value="1"/>
</dbReference>
<dbReference type="Gene3D" id="1.20.58.110">
    <property type="entry name" value="Ribosomal protein S20"/>
    <property type="match status" value="1"/>
</dbReference>
<dbReference type="HAMAP" id="MF_00500">
    <property type="entry name" value="Ribosomal_bS20"/>
    <property type="match status" value="1"/>
</dbReference>
<dbReference type="InterPro" id="IPR002583">
    <property type="entry name" value="Ribosomal_bS20"/>
</dbReference>
<dbReference type="InterPro" id="IPR036510">
    <property type="entry name" value="Ribosomal_bS20_sf"/>
</dbReference>
<dbReference type="NCBIfam" id="TIGR00029">
    <property type="entry name" value="S20"/>
    <property type="match status" value="1"/>
</dbReference>
<dbReference type="PANTHER" id="PTHR33398">
    <property type="entry name" value="30S RIBOSOMAL PROTEIN S20"/>
    <property type="match status" value="1"/>
</dbReference>
<dbReference type="PANTHER" id="PTHR33398:SF1">
    <property type="entry name" value="SMALL RIBOSOMAL SUBUNIT PROTEIN BS20C"/>
    <property type="match status" value="1"/>
</dbReference>
<dbReference type="Pfam" id="PF01649">
    <property type="entry name" value="Ribosomal_S20p"/>
    <property type="match status" value="1"/>
</dbReference>
<dbReference type="SUPFAM" id="SSF46992">
    <property type="entry name" value="Ribosomal protein S20"/>
    <property type="match status" value="1"/>
</dbReference>
<reference key="1">
    <citation type="journal article" date="2004" name="Proc. Natl. Acad. Sci. U.S.A.">
        <title>Genomic plasticity of the causative agent of melioidosis, Burkholderia pseudomallei.</title>
        <authorList>
            <person name="Holden M.T.G."/>
            <person name="Titball R.W."/>
            <person name="Peacock S.J."/>
            <person name="Cerdeno-Tarraga A.-M."/>
            <person name="Atkins T."/>
            <person name="Crossman L.C."/>
            <person name="Pitt T."/>
            <person name="Churcher C."/>
            <person name="Mungall K.L."/>
            <person name="Bentley S.D."/>
            <person name="Sebaihia M."/>
            <person name="Thomson N.R."/>
            <person name="Bason N."/>
            <person name="Beacham I.R."/>
            <person name="Brooks K."/>
            <person name="Brown K.A."/>
            <person name="Brown N.F."/>
            <person name="Challis G.L."/>
            <person name="Cherevach I."/>
            <person name="Chillingworth T."/>
            <person name="Cronin A."/>
            <person name="Crossett B."/>
            <person name="Davis P."/>
            <person name="DeShazer D."/>
            <person name="Feltwell T."/>
            <person name="Fraser A."/>
            <person name="Hance Z."/>
            <person name="Hauser H."/>
            <person name="Holroyd S."/>
            <person name="Jagels K."/>
            <person name="Keith K.E."/>
            <person name="Maddison M."/>
            <person name="Moule S."/>
            <person name="Price C."/>
            <person name="Quail M.A."/>
            <person name="Rabbinowitsch E."/>
            <person name="Rutherford K."/>
            <person name="Sanders M."/>
            <person name="Simmonds M."/>
            <person name="Songsivilai S."/>
            <person name="Stevens K."/>
            <person name="Tumapa S."/>
            <person name="Vesaratchavest M."/>
            <person name="Whitehead S."/>
            <person name="Yeats C."/>
            <person name="Barrell B.G."/>
            <person name="Oyston P.C.F."/>
            <person name="Parkhill J."/>
        </authorList>
    </citation>
    <scope>NUCLEOTIDE SEQUENCE [LARGE SCALE GENOMIC DNA]</scope>
    <source>
        <strain>K96243</strain>
    </source>
</reference>
<name>RS20_BURPS</name>
<accession>Q63WM0</accession>